<reference key="1">
    <citation type="submission" date="2007-05" db="EMBL/GenBank/DDBJ databases">
        <title>Complete sequence of chromosome of Staphylococcus aureus subsp. aureus JH9.</title>
        <authorList>
            <consortium name="US DOE Joint Genome Institute"/>
            <person name="Copeland A."/>
            <person name="Lucas S."/>
            <person name="Lapidus A."/>
            <person name="Barry K."/>
            <person name="Detter J.C."/>
            <person name="Glavina del Rio T."/>
            <person name="Hammon N."/>
            <person name="Israni S."/>
            <person name="Pitluck S."/>
            <person name="Chain P."/>
            <person name="Malfatti S."/>
            <person name="Shin M."/>
            <person name="Vergez L."/>
            <person name="Schmutz J."/>
            <person name="Larimer F."/>
            <person name="Land M."/>
            <person name="Hauser L."/>
            <person name="Kyrpides N."/>
            <person name="Kim E."/>
            <person name="Tomasz A."/>
            <person name="Richardson P."/>
        </authorList>
    </citation>
    <scope>NUCLEOTIDE SEQUENCE [LARGE SCALE GENOMIC DNA]</scope>
    <source>
        <strain>JH9</strain>
    </source>
</reference>
<dbReference type="EC" id="4.3.2.10" evidence="1"/>
<dbReference type="EMBL" id="CP000703">
    <property type="protein sequence ID" value="ABQ50473.1"/>
    <property type="molecule type" value="Genomic_DNA"/>
</dbReference>
<dbReference type="SMR" id="A5IWA0"/>
<dbReference type="KEGG" id="saj:SaurJH9_2697"/>
<dbReference type="HOGENOM" id="CLU_048577_4_0_9"/>
<dbReference type="UniPathway" id="UPA00031">
    <property type="reaction ID" value="UER00010"/>
</dbReference>
<dbReference type="GO" id="GO:0005737">
    <property type="term" value="C:cytoplasm"/>
    <property type="evidence" value="ECO:0007669"/>
    <property type="project" value="UniProtKB-SubCell"/>
</dbReference>
<dbReference type="GO" id="GO:0000107">
    <property type="term" value="F:imidazoleglycerol-phosphate synthase activity"/>
    <property type="evidence" value="ECO:0007669"/>
    <property type="project" value="UniProtKB-UniRule"/>
</dbReference>
<dbReference type="GO" id="GO:0016829">
    <property type="term" value="F:lyase activity"/>
    <property type="evidence" value="ECO:0007669"/>
    <property type="project" value="UniProtKB-KW"/>
</dbReference>
<dbReference type="GO" id="GO:0000105">
    <property type="term" value="P:L-histidine biosynthetic process"/>
    <property type="evidence" value="ECO:0007669"/>
    <property type="project" value="UniProtKB-UniRule"/>
</dbReference>
<dbReference type="CDD" id="cd04731">
    <property type="entry name" value="HisF"/>
    <property type="match status" value="1"/>
</dbReference>
<dbReference type="FunFam" id="3.20.20.70:FF:000462">
    <property type="entry name" value="Multifunctional fusion protein"/>
    <property type="match status" value="1"/>
</dbReference>
<dbReference type="Gene3D" id="3.20.20.70">
    <property type="entry name" value="Aldolase class I"/>
    <property type="match status" value="1"/>
</dbReference>
<dbReference type="HAMAP" id="MF_01013">
    <property type="entry name" value="HisF"/>
    <property type="match status" value="1"/>
</dbReference>
<dbReference type="InterPro" id="IPR013785">
    <property type="entry name" value="Aldolase_TIM"/>
</dbReference>
<dbReference type="InterPro" id="IPR006062">
    <property type="entry name" value="His_biosynth"/>
</dbReference>
<dbReference type="InterPro" id="IPR004651">
    <property type="entry name" value="HisF"/>
</dbReference>
<dbReference type="InterPro" id="IPR050064">
    <property type="entry name" value="IGPS_HisA/HisF"/>
</dbReference>
<dbReference type="InterPro" id="IPR011060">
    <property type="entry name" value="RibuloseP-bd_barrel"/>
</dbReference>
<dbReference type="NCBIfam" id="TIGR00735">
    <property type="entry name" value="hisF"/>
    <property type="match status" value="1"/>
</dbReference>
<dbReference type="PANTHER" id="PTHR21235:SF2">
    <property type="entry name" value="IMIDAZOLE GLYCEROL PHOSPHATE SYNTHASE HISHF"/>
    <property type="match status" value="1"/>
</dbReference>
<dbReference type="PANTHER" id="PTHR21235">
    <property type="entry name" value="IMIDAZOLE GLYCEROL PHOSPHATE SYNTHASE SUBUNIT HISF/H IGP SYNTHASE SUBUNIT HISF/H"/>
    <property type="match status" value="1"/>
</dbReference>
<dbReference type="Pfam" id="PF00977">
    <property type="entry name" value="His_biosynth"/>
    <property type="match status" value="1"/>
</dbReference>
<dbReference type="SUPFAM" id="SSF51366">
    <property type="entry name" value="Ribulose-phoshate binding barrel"/>
    <property type="match status" value="1"/>
</dbReference>
<gene>
    <name evidence="1" type="primary">hisF</name>
    <name type="ordered locus">SaurJH9_2697</name>
</gene>
<keyword id="KW-0028">Amino-acid biosynthesis</keyword>
<keyword id="KW-0963">Cytoplasm</keyword>
<keyword id="KW-0368">Histidine biosynthesis</keyword>
<keyword id="KW-0456">Lyase</keyword>
<organism>
    <name type="scientific">Staphylococcus aureus (strain JH9)</name>
    <dbReference type="NCBI Taxonomy" id="359786"/>
    <lineage>
        <taxon>Bacteria</taxon>
        <taxon>Bacillati</taxon>
        <taxon>Bacillota</taxon>
        <taxon>Bacilli</taxon>
        <taxon>Bacillales</taxon>
        <taxon>Staphylococcaceae</taxon>
        <taxon>Staphylococcus</taxon>
    </lineage>
</organism>
<accession>A5IWA0</accession>
<comment type="function">
    <text evidence="1">IGPS catalyzes the conversion of PRFAR and glutamine to IGP, AICAR and glutamate. The HisF subunit catalyzes the cyclization activity that produces IGP and AICAR from PRFAR using the ammonia provided by the HisH subunit.</text>
</comment>
<comment type="catalytic activity">
    <reaction evidence="1">
        <text>5-[(5-phospho-1-deoxy-D-ribulos-1-ylimino)methylamino]-1-(5-phospho-beta-D-ribosyl)imidazole-4-carboxamide + L-glutamine = D-erythro-1-(imidazol-4-yl)glycerol 3-phosphate + 5-amino-1-(5-phospho-beta-D-ribosyl)imidazole-4-carboxamide + L-glutamate + H(+)</text>
        <dbReference type="Rhea" id="RHEA:24793"/>
        <dbReference type="ChEBI" id="CHEBI:15378"/>
        <dbReference type="ChEBI" id="CHEBI:29985"/>
        <dbReference type="ChEBI" id="CHEBI:58278"/>
        <dbReference type="ChEBI" id="CHEBI:58359"/>
        <dbReference type="ChEBI" id="CHEBI:58475"/>
        <dbReference type="ChEBI" id="CHEBI:58525"/>
        <dbReference type="EC" id="4.3.2.10"/>
    </reaction>
</comment>
<comment type="pathway">
    <text evidence="1">Amino-acid biosynthesis; L-histidine biosynthesis; L-histidine from 5-phospho-alpha-D-ribose 1-diphosphate: step 5/9.</text>
</comment>
<comment type="subunit">
    <text evidence="1">Heterodimer of HisH and HisF.</text>
</comment>
<comment type="subcellular location">
    <subcellularLocation>
        <location evidence="1">Cytoplasm</location>
    </subcellularLocation>
</comment>
<comment type="similarity">
    <text evidence="1">Belongs to the HisA/HisF family.</text>
</comment>
<proteinExistence type="inferred from homology"/>
<feature type="chain" id="PRO_1000084084" description="Imidazole glycerol phosphate synthase subunit HisF">
    <location>
        <begin position="1"/>
        <end position="252"/>
    </location>
</feature>
<feature type="active site" evidence="1">
    <location>
        <position position="11"/>
    </location>
</feature>
<feature type="active site" evidence="1">
    <location>
        <position position="130"/>
    </location>
</feature>
<sequence length="252" mass="27530">MIKKRIIPCLDVKDGRVVKGIQFKGLRDIGNPVDLAIYYNEAGADELVFLDISKTEEGHSLMLEVIEQTASRLFIPLTVGGGIQSLDDITQLLNHGADKVSLNSSALKNPQLIKQASDKFGRQCICIAIDSYYDPERKAHYCCTHGGKKMTNIKVYDWVQQVEQLGAGELLVTSMGHDGMKQGFDIEHLAKIKSLVNIPIIASGGGGNAQHFVELFNQTDVSAGLAASILHDRETTVQSIKEVIRQGGIAVR</sequence>
<protein>
    <recommendedName>
        <fullName evidence="1">Imidazole glycerol phosphate synthase subunit HisF</fullName>
        <ecNumber evidence="1">4.3.2.10</ecNumber>
    </recommendedName>
    <alternativeName>
        <fullName evidence="1">IGP synthase cyclase subunit</fullName>
    </alternativeName>
    <alternativeName>
        <fullName evidence="1">IGP synthase subunit HisF</fullName>
    </alternativeName>
    <alternativeName>
        <fullName evidence="1">ImGP synthase subunit HisF</fullName>
        <shortName evidence="1">IGPS subunit HisF</shortName>
    </alternativeName>
</protein>
<name>HIS6_STAA9</name>
<evidence type="ECO:0000255" key="1">
    <source>
        <dbReference type="HAMAP-Rule" id="MF_01013"/>
    </source>
</evidence>